<gene>
    <name type="ordered locus">WS1016</name>
</gene>
<feature type="chain" id="PRO_0000175932" description="Probable transcriptional regulatory protein WS1016">
    <location>
        <begin position="1"/>
        <end position="237"/>
    </location>
</feature>
<accession>Q7MRV4</accession>
<evidence type="ECO:0000255" key="1">
    <source>
        <dbReference type="HAMAP-Rule" id="MF_00693"/>
    </source>
</evidence>
<comment type="subcellular location">
    <subcellularLocation>
        <location evidence="1">Cytoplasm</location>
    </subcellularLocation>
</comment>
<comment type="similarity">
    <text evidence="1">Belongs to the TACO1 family.</text>
</comment>
<dbReference type="EMBL" id="BX571659">
    <property type="protein sequence ID" value="CAE10118.1"/>
    <property type="molecule type" value="Genomic_DNA"/>
</dbReference>
<dbReference type="RefSeq" id="WP_011138912.1">
    <property type="nucleotide sequence ID" value="NC_005090.1"/>
</dbReference>
<dbReference type="SMR" id="Q7MRV4"/>
<dbReference type="STRING" id="273121.WS1016"/>
<dbReference type="KEGG" id="wsu:WS1016"/>
<dbReference type="eggNOG" id="COG0217">
    <property type="taxonomic scope" value="Bacteria"/>
</dbReference>
<dbReference type="HOGENOM" id="CLU_062974_2_2_7"/>
<dbReference type="Proteomes" id="UP000000422">
    <property type="component" value="Chromosome"/>
</dbReference>
<dbReference type="GO" id="GO:0005829">
    <property type="term" value="C:cytosol"/>
    <property type="evidence" value="ECO:0007669"/>
    <property type="project" value="TreeGrafter"/>
</dbReference>
<dbReference type="GO" id="GO:0003677">
    <property type="term" value="F:DNA binding"/>
    <property type="evidence" value="ECO:0007669"/>
    <property type="project" value="UniProtKB-UniRule"/>
</dbReference>
<dbReference type="GO" id="GO:0006355">
    <property type="term" value="P:regulation of DNA-templated transcription"/>
    <property type="evidence" value="ECO:0007669"/>
    <property type="project" value="UniProtKB-UniRule"/>
</dbReference>
<dbReference type="FunFam" id="1.10.10.200:FF:000004">
    <property type="entry name" value="Probable transcriptional regulatory protein BSBG_02618"/>
    <property type="match status" value="1"/>
</dbReference>
<dbReference type="Gene3D" id="1.10.10.200">
    <property type="match status" value="1"/>
</dbReference>
<dbReference type="Gene3D" id="3.30.70.980">
    <property type="match status" value="2"/>
</dbReference>
<dbReference type="HAMAP" id="MF_00693">
    <property type="entry name" value="Transcrip_reg_TACO1"/>
    <property type="match status" value="1"/>
</dbReference>
<dbReference type="InterPro" id="IPR017856">
    <property type="entry name" value="Integrase-like_N"/>
</dbReference>
<dbReference type="InterPro" id="IPR048300">
    <property type="entry name" value="TACO1_YebC-like_2nd/3rd_dom"/>
</dbReference>
<dbReference type="InterPro" id="IPR049083">
    <property type="entry name" value="TACO1_YebC_N"/>
</dbReference>
<dbReference type="InterPro" id="IPR002876">
    <property type="entry name" value="Transcrip_reg_TACO1-like"/>
</dbReference>
<dbReference type="InterPro" id="IPR026564">
    <property type="entry name" value="Transcrip_reg_TACO1-like_dom3"/>
</dbReference>
<dbReference type="InterPro" id="IPR029072">
    <property type="entry name" value="YebC-like"/>
</dbReference>
<dbReference type="NCBIfam" id="NF009044">
    <property type="entry name" value="PRK12378.1"/>
    <property type="match status" value="1"/>
</dbReference>
<dbReference type="NCBIfam" id="TIGR01033">
    <property type="entry name" value="YebC/PmpR family DNA-binding transcriptional regulator"/>
    <property type="match status" value="1"/>
</dbReference>
<dbReference type="PANTHER" id="PTHR12532:SF6">
    <property type="entry name" value="TRANSCRIPTIONAL REGULATORY PROTEIN YEBC-RELATED"/>
    <property type="match status" value="1"/>
</dbReference>
<dbReference type="PANTHER" id="PTHR12532">
    <property type="entry name" value="TRANSLATIONAL ACTIVATOR OF CYTOCHROME C OXIDASE 1"/>
    <property type="match status" value="1"/>
</dbReference>
<dbReference type="Pfam" id="PF20772">
    <property type="entry name" value="TACO1_YebC_N"/>
    <property type="match status" value="1"/>
</dbReference>
<dbReference type="Pfam" id="PF01709">
    <property type="entry name" value="Transcrip_reg"/>
    <property type="match status" value="1"/>
</dbReference>
<dbReference type="SUPFAM" id="SSF75625">
    <property type="entry name" value="YebC-like"/>
    <property type="match status" value="1"/>
</dbReference>
<protein>
    <recommendedName>
        <fullName evidence="1">Probable transcriptional regulatory protein WS1016</fullName>
    </recommendedName>
</protein>
<organism>
    <name type="scientific">Wolinella succinogenes (strain ATCC 29543 / DSM 1740 / CCUG 13145 / JCM 31913 / LMG 7466 / NCTC 11488 / FDC 602W)</name>
    <name type="common">Vibrio succinogenes</name>
    <dbReference type="NCBI Taxonomy" id="273121"/>
    <lineage>
        <taxon>Bacteria</taxon>
        <taxon>Pseudomonadati</taxon>
        <taxon>Campylobacterota</taxon>
        <taxon>Epsilonproteobacteria</taxon>
        <taxon>Campylobacterales</taxon>
        <taxon>Helicobacteraceae</taxon>
        <taxon>Wolinella</taxon>
    </lineage>
</organism>
<sequence>MGRAFEYRRAAKEKRWDKMSKLFPKLGKLITIAAKEGGADPEMNAKLRTAITNAKAQNMPKDNIDAAIKRALGKDGVVITEVNYEAKGPHGVLLFIECATDNPTRTVANVKSYINKIGGQLLQNGSLEFMFSHKAVFEFPKSHLHMDREELELVLIDAGLEELDEQEETLYVYGDYTQFGSLSSTLEELKIDVTKASLQRIANTPVEFSEEQLADIEKLIDRIEDDDDVQAVFTNIA</sequence>
<proteinExistence type="inferred from homology"/>
<reference key="1">
    <citation type="journal article" date="2003" name="Proc. Natl. Acad. Sci. U.S.A.">
        <title>Complete genome sequence and analysis of Wolinella succinogenes.</title>
        <authorList>
            <person name="Baar C."/>
            <person name="Eppinger M."/>
            <person name="Raddatz G."/>
            <person name="Simon J."/>
            <person name="Lanz C."/>
            <person name="Klimmek O."/>
            <person name="Nandakumar R."/>
            <person name="Gross R."/>
            <person name="Rosinus A."/>
            <person name="Keller H."/>
            <person name="Jagtap P."/>
            <person name="Linke B."/>
            <person name="Meyer F."/>
            <person name="Lederer H."/>
            <person name="Schuster S.C."/>
        </authorList>
    </citation>
    <scope>NUCLEOTIDE SEQUENCE [LARGE SCALE GENOMIC DNA]</scope>
    <source>
        <strain>ATCC 29543 / DSM 1740 / CCUG 13145 / JCM 31913 / LMG 7466 / NCTC 11488 / FDC 602W</strain>
    </source>
</reference>
<name>Y1016_WOLSU</name>
<keyword id="KW-0963">Cytoplasm</keyword>
<keyword id="KW-0238">DNA-binding</keyword>
<keyword id="KW-1185">Reference proteome</keyword>
<keyword id="KW-0804">Transcription</keyword>
<keyword id="KW-0805">Transcription regulation</keyword>